<organism>
    <name type="scientific">Nitrosomonas eutropha (strain DSM 101675 / C91 / Nm57)</name>
    <dbReference type="NCBI Taxonomy" id="335283"/>
    <lineage>
        <taxon>Bacteria</taxon>
        <taxon>Pseudomonadati</taxon>
        <taxon>Pseudomonadota</taxon>
        <taxon>Betaproteobacteria</taxon>
        <taxon>Nitrosomonadales</taxon>
        <taxon>Nitrosomonadaceae</taxon>
        <taxon>Nitrosomonas</taxon>
    </lineage>
</organism>
<keyword id="KW-0998">Cell outer membrane</keyword>
<keyword id="KW-0472">Membrane</keyword>
<keyword id="KW-0732">Signal</keyword>
<gene>
    <name evidence="1" type="primary">lptD</name>
    <name type="synonym">imp</name>
    <name type="synonym">ostA</name>
    <name type="ordered locus">Neut_1216</name>
</gene>
<dbReference type="EMBL" id="CP000450">
    <property type="protein sequence ID" value="ABI59471.1"/>
    <property type="molecule type" value="Genomic_DNA"/>
</dbReference>
<dbReference type="SMR" id="Q0AGR1"/>
<dbReference type="STRING" id="335283.Neut_1216"/>
<dbReference type="KEGG" id="net:Neut_1216"/>
<dbReference type="eggNOG" id="COG1452">
    <property type="taxonomic scope" value="Bacteria"/>
</dbReference>
<dbReference type="HOGENOM" id="CLU_009039_0_0_4"/>
<dbReference type="OrthoDB" id="9760225at2"/>
<dbReference type="Proteomes" id="UP000001966">
    <property type="component" value="Chromosome"/>
</dbReference>
<dbReference type="GO" id="GO:0009279">
    <property type="term" value="C:cell outer membrane"/>
    <property type="evidence" value="ECO:0007669"/>
    <property type="project" value="UniProtKB-SubCell"/>
</dbReference>
<dbReference type="GO" id="GO:1990351">
    <property type="term" value="C:transporter complex"/>
    <property type="evidence" value="ECO:0007669"/>
    <property type="project" value="TreeGrafter"/>
</dbReference>
<dbReference type="GO" id="GO:0043165">
    <property type="term" value="P:Gram-negative-bacterium-type cell outer membrane assembly"/>
    <property type="evidence" value="ECO:0007669"/>
    <property type="project" value="UniProtKB-UniRule"/>
</dbReference>
<dbReference type="GO" id="GO:0015920">
    <property type="term" value="P:lipopolysaccharide transport"/>
    <property type="evidence" value="ECO:0007669"/>
    <property type="project" value="InterPro"/>
</dbReference>
<dbReference type="Gene3D" id="2.60.450.10">
    <property type="entry name" value="Lipopolysaccharide (LPS) transport protein A like domain"/>
    <property type="match status" value="1"/>
</dbReference>
<dbReference type="HAMAP" id="MF_01411">
    <property type="entry name" value="LPS_assembly_LptD"/>
    <property type="match status" value="1"/>
</dbReference>
<dbReference type="InterPro" id="IPR020889">
    <property type="entry name" value="LipoPS_assembly_LptD"/>
</dbReference>
<dbReference type="InterPro" id="IPR050218">
    <property type="entry name" value="LptD"/>
</dbReference>
<dbReference type="InterPro" id="IPR007543">
    <property type="entry name" value="LptD_C"/>
</dbReference>
<dbReference type="InterPro" id="IPR005653">
    <property type="entry name" value="OstA-like_N"/>
</dbReference>
<dbReference type="PANTHER" id="PTHR30189">
    <property type="entry name" value="LPS-ASSEMBLY PROTEIN"/>
    <property type="match status" value="1"/>
</dbReference>
<dbReference type="PANTHER" id="PTHR30189:SF1">
    <property type="entry name" value="LPS-ASSEMBLY PROTEIN LPTD"/>
    <property type="match status" value="1"/>
</dbReference>
<dbReference type="Pfam" id="PF04453">
    <property type="entry name" value="LptD"/>
    <property type="match status" value="1"/>
</dbReference>
<dbReference type="Pfam" id="PF03968">
    <property type="entry name" value="LptD_N"/>
    <property type="match status" value="1"/>
</dbReference>
<comment type="function">
    <text evidence="1">Together with LptE, is involved in the assembly of lipopolysaccharide (LPS) at the surface of the outer membrane.</text>
</comment>
<comment type="subunit">
    <text evidence="1">Component of the lipopolysaccharide transport and assembly complex. Interacts with LptE and LptA.</text>
</comment>
<comment type="subcellular location">
    <subcellularLocation>
        <location evidence="1">Cell outer membrane</location>
    </subcellularLocation>
</comment>
<comment type="similarity">
    <text evidence="1">Belongs to the LptD family.</text>
</comment>
<sequence length="725" mass="82357">MSLLSKLHLILYICLLLLPLRFVNAEQLSGSGESQPVHIEADRIDGHYQQEIEATGNVRMRRGDQTLSADHVKYYQDTEDVEVKGNALLERPDDTLWGTFLQMNLQTDIGELRDPRYALKGGNGRGSGSLLLLEGENQYRIKKARYTTCPEDNHDWYILADDLEIDNEKKVGTARHASIRFKDVPILYLPWMNFSFSKERKTGFLSPIMGNTSRSGVEVSVPFYWNIAPNYDATITPRLMSRRGVMLDNEFRYIGQGLGGRLQFDYLPNDLVTDTTRYGLQFNHSQFLGSGWFGALNYNRVSDHNYFRDLGNNILFTSQVNLLQQATASYFSELGRNGMLTFSTLMQQFQTVQDPRAPIISPFKILPRFTLNAVKSNVYGLDFDLASSFTHFSHPTLPHGLRFTAFPSVALPLENSFGFIRPRVGLHYTKYDLNTPAFPGTNDKHPDRSVPIFSLDSGVVLERDMTLGGGNFIQTLEPRVFYTYIPYREQRLLPNFDSAEMDFSFAQLFMEKRFSGEDRINDANEITLAMSSRLIHSATGNERLRFSVGQRIRFSDRRVLLTSPQVTRAGSDFIAELSGSLAQHVKTDAGIQLNQNNLLIEKIRTGISYNPAPGQVINAGYRFTRDVLEQVDLSTQWPFLKRWQGFAAINYSLKNDKLLAGLLGLEYNACCWSLRLVASRFTTATQKTSTNIFVQLELNDLMRIGTNPIRVLQQSIPGYVRTDLQ</sequence>
<accession>Q0AGR1</accession>
<feature type="signal peptide" evidence="1">
    <location>
        <begin position="1"/>
        <end position="25"/>
    </location>
</feature>
<feature type="chain" id="PRO_5000132405" description="LPS-assembly protein LptD">
    <location>
        <begin position="26"/>
        <end position="725"/>
    </location>
</feature>
<name>LPTD_NITEC</name>
<reference key="1">
    <citation type="journal article" date="2007" name="Environ. Microbiol.">
        <title>Whole-genome analysis of the ammonia-oxidizing bacterium, Nitrosomonas eutropha C91: implications for niche adaptation.</title>
        <authorList>
            <person name="Stein L.Y."/>
            <person name="Arp D.J."/>
            <person name="Berube P.M."/>
            <person name="Chain P.S."/>
            <person name="Hauser L."/>
            <person name="Jetten M.S."/>
            <person name="Klotz M.G."/>
            <person name="Larimer F.W."/>
            <person name="Norton J.M."/>
            <person name="Op den Camp H.J.M."/>
            <person name="Shin M."/>
            <person name="Wei X."/>
        </authorList>
    </citation>
    <scope>NUCLEOTIDE SEQUENCE [LARGE SCALE GENOMIC DNA]</scope>
    <source>
        <strain>DSM 101675 / C91 / Nm57</strain>
    </source>
</reference>
<proteinExistence type="inferred from homology"/>
<protein>
    <recommendedName>
        <fullName evidence="1">LPS-assembly protein LptD</fullName>
    </recommendedName>
</protein>
<evidence type="ECO:0000255" key="1">
    <source>
        <dbReference type="HAMAP-Rule" id="MF_01411"/>
    </source>
</evidence>